<dbReference type="EMBL" id="CP000970">
    <property type="protein sequence ID" value="ACB18805.1"/>
    <property type="molecule type" value="Genomic_DNA"/>
</dbReference>
<dbReference type="RefSeq" id="WP_001185665.1">
    <property type="nucleotide sequence ID" value="NC_010498.1"/>
</dbReference>
<dbReference type="SMR" id="B1LHZ3"/>
<dbReference type="GeneID" id="93776260"/>
<dbReference type="KEGG" id="ecm:EcSMS35_1975"/>
<dbReference type="HOGENOM" id="CLU_137929_2_2_6"/>
<dbReference type="Proteomes" id="UP000007011">
    <property type="component" value="Chromosome"/>
</dbReference>
<dbReference type="GO" id="GO:0051301">
    <property type="term" value="P:cell division"/>
    <property type="evidence" value="ECO:0007669"/>
    <property type="project" value="UniProtKB-KW"/>
</dbReference>
<dbReference type="GO" id="GO:0032955">
    <property type="term" value="P:regulation of division septum assembly"/>
    <property type="evidence" value="ECO:0007669"/>
    <property type="project" value="InterPro"/>
</dbReference>
<dbReference type="FunFam" id="3.30.1070.10:FF:000001">
    <property type="entry name" value="Cell division topological specificity factor"/>
    <property type="match status" value="1"/>
</dbReference>
<dbReference type="Gene3D" id="3.30.1070.10">
    <property type="entry name" value="Cell division topological specificity factor MinE"/>
    <property type="match status" value="1"/>
</dbReference>
<dbReference type="HAMAP" id="MF_00262">
    <property type="entry name" value="MinE"/>
    <property type="match status" value="1"/>
</dbReference>
<dbReference type="InterPro" id="IPR005527">
    <property type="entry name" value="MinE"/>
</dbReference>
<dbReference type="InterPro" id="IPR036707">
    <property type="entry name" value="MinE_sf"/>
</dbReference>
<dbReference type="NCBIfam" id="TIGR01215">
    <property type="entry name" value="minE"/>
    <property type="match status" value="1"/>
</dbReference>
<dbReference type="NCBIfam" id="NF001422">
    <property type="entry name" value="PRK00296.1"/>
    <property type="match status" value="1"/>
</dbReference>
<dbReference type="Pfam" id="PF03776">
    <property type="entry name" value="MinE"/>
    <property type="match status" value="1"/>
</dbReference>
<dbReference type="SUPFAM" id="SSF55229">
    <property type="entry name" value="Cell division protein MinE topological specificity domain"/>
    <property type="match status" value="1"/>
</dbReference>
<comment type="function">
    <text evidence="1">Prevents the cell division inhibition by proteins MinC and MinD at internal division sites while permitting inhibition at polar sites. This ensures cell division at the proper site by restricting the formation of a division septum at the midpoint of the long axis of the cell.</text>
</comment>
<comment type="similarity">
    <text evidence="1">Belongs to the MinE family.</text>
</comment>
<gene>
    <name evidence="1" type="primary">minE</name>
    <name type="ordered locus">EcSMS35_1975</name>
</gene>
<sequence length="88" mass="10235">MALLDFFLSRKKNTANIAKERLQIIVAERRRSDAEPHYLPQLRKDILEVICKYVQIDPEMVTVQLEQKDGDISILELNVTLPEAEELK</sequence>
<name>MINE_ECOSM</name>
<accession>B1LHZ3</accession>
<reference key="1">
    <citation type="journal article" date="2008" name="J. Bacteriol.">
        <title>Insights into the environmental resistance gene pool from the genome sequence of the multidrug-resistant environmental isolate Escherichia coli SMS-3-5.</title>
        <authorList>
            <person name="Fricke W.F."/>
            <person name="Wright M.S."/>
            <person name="Lindell A.H."/>
            <person name="Harkins D.M."/>
            <person name="Baker-Austin C."/>
            <person name="Ravel J."/>
            <person name="Stepanauskas R."/>
        </authorList>
    </citation>
    <scope>NUCLEOTIDE SEQUENCE [LARGE SCALE GENOMIC DNA]</scope>
    <source>
        <strain>SMS-3-5 / SECEC</strain>
    </source>
</reference>
<protein>
    <recommendedName>
        <fullName evidence="1">Cell division topological specificity factor</fullName>
    </recommendedName>
</protein>
<proteinExistence type="inferred from homology"/>
<organism>
    <name type="scientific">Escherichia coli (strain SMS-3-5 / SECEC)</name>
    <dbReference type="NCBI Taxonomy" id="439855"/>
    <lineage>
        <taxon>Bacteria</taxon>
        <taxon>Pseudomonadati</taxon>
        <taxon>Pseudomonadota</taxon>
        <taxon>Gammaproteobacteria</taxon>
        <taxon>Enterobacterales</taxon>
        <taxon>Enterobacteriaceae</taxon>
        <taxon>Escherichia</taxon>
    </lineage>
</organism>
<feature type="chain" id="PRO_1000191278" description="Cell division topological specificity factor">
    <location>
        <begin position="1"/>
        <end position="88"/>
    </location>
</feature>
<keyword id="KW-0131">Cell cycle</keyword>
<keyword id="KW-0132">Cell division</keyword>
<evidence type="ECO:0000255" key="1">
    <source>
        <dbReference type="HAMAP-Rule" id="MF_00262"/>
    </source>
</evidence>